<organism>
    <name type="scientific">Saccharomyces cerevisiae (strain ATCC 204508 / S288c)</name>
    <name type="common">Baker's yeast</name>
    <dbReference type="NCBI Taxonomy" id="559292"/>
    <lineage>
        <taxon>Eukaryota</taxon>
        <taxon>Fungi</taxon>
        <taxon>Dikarya</taxon>
        <taxon>Ascomycota</taxon>
        <taxon>Saccharomycotina</taxon>
        <taxon>Saccharomycetes</taxon>
        <taxon>Saccharomycetales</taxon>
        <taxon>Saccharomycetaceae</taxon>
        <taxon>Saccharomyces</taxon>
    </lineage>
</organism>
<sequence length="800" mass="90088">MASVPKRHTYGGNVVTDRDRHSLQRNNEILHPIHKNQRKHATFGPYIIGSTLGEGEFGKVKLGWTKASSSNEVPKQVAIKLIRRDTIKKDADKEIKIYREINALKHLTHPNIIYLEEVLQNSKYIGIVLEFVSGGEFYKYIQRKRRLKESSACRLFAQLISGVNYMHYKGLVHRDLKLENLLLDKHENLVITDFGFVNEFFEDNELMKTSCGSPCYAAPELVVSTKAYEARKADVWSCGVILYAMLAGYLPWDDDHENPTGDDIARLYKYITQTPLKFPEYITPIPRDLLRRILVPNPRRRINLQTIKRHVWLKPHEAFLSIQPNYWDEHLQKERPKPPNKGDVGRHSTYSSSASSYSKSRDRNSLIIESTLEQHRMSPQLATSRPASPTFSTGSKVVLNDTKNDMKESNINGERTSASCRYTRDSKGNGQTQIEQVSARHSSRGNKHTSVAGLVTIPGSPTTARTRNAPSSKLTEHVKDSSQTSFTQEEFHRIGNYHVPRSRPRPTSYYPGLSRNTADNSLADIPVNKLGSNGRLTDAKDPVPLNAIHDTNKATISNNSIMLLSEGPAAKTSPVDYHYAIGDLNHGDKPITEVIDKINKDLTHKAAENGFPRESIDPESTSTILVTKEPTNSTDEDHVESQLENVGHSSNKSDASSDKDSKKIYEKKRFSFMSLYSSLNGSRSTVESRTSKGNAPPVSSRNPSGQSNRSNIKITQQQPRNLSDRVPNPDKKINDNRIRDNAPSYAESENPGRSVRASVMVSTLREENRSELSNEGNNVEAQTSTARKVLNFFKRRSMRV</sequence>
<keyword id="KW-0067">ATP-binding</keyword>
<keyword id="KW-0418">Kinase</keyword>
<keyword id="KW-0547">Nucleotide-binding</keyword>
<keyword id="KW-0597">Phosphoprotein</keyword>
<keyword id="KW-1185">Reference proteome</keyword>
<keyword id="KW-0723">Serine/threonine-protein kinase</keyword>
<keyword id="KW-0808">Transferase</keyword>
<gene>
    <name type="primary">KIN4</name>
    <name type="synonym">KIN3</name>
    <name type="synonym">KIN31</name>
    <name type="ordered locus">YOR233W</name>
    <name type="ORF">O5220</name>
</gene>
<accession>Q01919</accession>
<accession>D6W2T7</accession>
<proteinExistence type="evidence at protein level"/>
<protein>
    <recommendedName>
        <fullName>Serine/threonine-protein kinase KIN4</fullName>
        <ecNumber>2.7.11.1</ecNumber>
    </recommendedName>
</protein>
<comment type="function">
    <text>This protein is probably a serine/threonine protein kinase.</text>
</comment>
<comment type="catalytic activity">
    <reaction>
        <text>L-seryl-[protein] + ATP = O-phospho-L-seryl-[protein] + ADP + H(+)</text>
        <dbReference type="Rhea" id="RHEA:17989"/>
        <dbReference type="Rhea" id="RHEA-COMP:9863"/>
        <dbReference type="Rhea" id="RHEA-COMP:11604"/>
        <dbReference type="ChEBI" id="CHEBI:15378"/>
        <dbReference type="ChEBI" id="CHEBI:29999"/>
        <dbReference type="ChEBI" id="CHEBI:30616"/>
        <dbReference type="ChEBI" id="CHEBI:83421"/>
        <dbReference type="ChEBI" id="CHEBI:456216"/>
        <dbReference type="EC" id="2.7.11.1"/>
    </reaction>
</comment>
<comment type="catalytic activity">
    <reaction>
        <text>L-threonyl-[protein] + ATP = O-phospho-L-threonyl-[protein] + ADP + H(+)</text>
        <dbReference type="Rhea" id="RHEA:46608"/>
        <dbReference type="Rhea" id="RHEA-COMP:11060"/>
        <dbReference type="Rhea" id="RHEA-COMP:11605"/>
        <dbReference type="ChEBI" id="CHEBI:15378"/>
        <dbReference type="ChEBI" id="CHEBI:30013"/>
        <dbReference type="ChEBI" id="CHEBI:30616"/>
        <dbReference type="ChEBI" id="CHEBI:61977"/>
        <dbReference type="ChEBI" id="CHEBI:456216"/>
        <dbReference type="EC" id="2.7.11.1"/>
    </reaction>
</comment>
<comment type="miscellaneous">
    <text evidence="4">Present with 143 molecules/cell in log phase SD medium.</text>
</comment>
<comment type="similarity">
    <text evidence="1">Belongs to the protein kinase superfamily. Ser/Thr protein kinase family.</text>
</comment>
<evidence type="ECO:0000255" key="1">
    <source>
        <dbReference type="PROSITE-ProRule" id="PRU00159"/>
    </source>
</evidence>
<evidence type="ECO:0000255" key="2">
    <source>
        <dbReference type="PROSITE-ProRule" id="PRU10027"/>
    </source>
</evidence>
<evidence type="ECO:0000256" key="3">
    <source>
        <dbReference type="SAM" id="MobiDB-lite"/>
    </source>
</evidence>
<evidence type="ECO:0000269" key="4">
    <source>
    </source>
</evidence>
<evidence type="ECO:0007744" key="5">
    <source>
    </source>
</evidence>
<evidence type="ECO:0007744" key="6">
    <source>
    </source>
</evidence>
<evidence type="ECO:0007744" key="7">
    <source>
    </source>
</evidence>
<dbReference type="EC" id="2.7.11.1"/>
<dbReference type="EMBL" id="X67916">
    <property type="protein sequence ID" value="CAA48115.1"/>
    <property type="molecule type" value="Genomic_DNA"/>
</dbReference>
<dbReference type="EMBL" id="Z75141">
    <property type="protein sequence ID" value="CAA99453.1"/>
    <property type="molecule type" value="Genomic_DNA"/>
</dbReference>
<dbReference type="EMBL" id="BK006948">
    <property type="protein sequence ID" value="DAA11003.1"/>
    <property type="molecule type" value="Genomic_DNA"/>
</dbReference>
<dbReference type="PIR" id="S29344">
    <property type="entry name" value="S29344"/>
</dbReference>
<dbReference type="RefSeq" id="NP_014876.1">
    <property type="nucleotide sequence ID" value="NM_001183652.1"/>
</dbReference>
<dbReference type="SMR" id="Q01919"/>
<dbReference type="BioGRID" id="34626">
    <property type="interactions" value="347"/>
</dbReference>
<dbReference type="DIP" id="DIP-7214N"/>
<dbReference type="FunCoup" id="Q01919">
    <property type="interactions" value="442"/>
</dbReference>
<dbReference type="IntAct" id="Q01919">
    <property type="interactions" value="22"/>
</dbReference>
<dbReference type="MINT" id="Q01919"/>
<dbReference type="STRING" id="4932.YOR233W"/>
<dbReference type="iPTMnet" id="Q01919"/>
<dbReference type="PaxDb" id="4932-YOR233W"/>
<dbReference type="PeptideAtlas" id="Q01919"/>
<dbReference type="EnsemblFungi" id="YOR233W_mRNA">
    <property type="protein sequence ID" value="YOR233W"/>
    <property type="gene ID" value="YOR233W"/>
</dbReference>
<dbReference type="GeneID" id="854408"/>
<dbReference type="KEGG" id="sce:YOR233W"/>
<dbReference type="AGR" id="SGD:S000005759"/>
<dbReference type="SGD" id="S000005759">
    <property type="gene designation" value="KIN4"/>
</dbReference>
<dbReference type="VEuPathDB" id="FungiDB:YOR233W"/>
<dbReference type="eggNOG" id="KOG0583">
    <property type="taxonomic scope" value="Eukaryota"/>
</dbReference>
<dbReference type="GeneTree" id="ENSGT00940000176459"/>
<dbReference type="HOGENOM" id="CLU_002888_1_1_1"/>
<dbReference type="InParanoid" id="Q01919"/>
<dbReference type="OMA" id="RRRINLQ"/>
<dbReference type="OrthoDB" id="193931at2759"/>
<dbReference type="BioCyc" id="YEAST:G3O-33731-MONOMER"/>
<dbReference type="BRENDA" id="2.7.11.1">
    <property type="organism ID" value="984"/>
</dbReference>
<dbReference type="Reactome" id="R-SCE-1632852">
    <property type="pathway name" value="Macroautophagy"/>
</dbReference>
<dbReference type="Reactome" id="R-SCE-380972">
    <property type="pathway name" value="Energy dependent regulation of mTOR by LKB1-AMPK"/>
</dbReference>
<dbReference type="BioGRID-ORCS" id="854408">
    <property type="hits" value="0 hits in 13 CRISPR screens"/>
</dbReference>
<dbReference type="CD-CODE" id="876000F7">
    <property type="entry name" value="Centrosome"/>
</dbReference>
<dbReference type="PRO" id="PR:Q01919"/>
<dbReference type="Proteomes" id="UP000002311">
    <property type="component" value="Chromosome XV"/>
</dbReference>
<dbReference type="RNAct" id="Q01919">
    <property type="molecule type" value="protein"/>
</dbReference>
<dbReference type="GO" id="GO:0005938">
    <property type="term" value="C:cell cortex"/>
    <property type="evidence" value="ECO:0000314"/>
    <property type="project" value="SGD"/>
</dbReference>
<dbReference type="GO" id="GO:0005935">
    <property type="term" value="C:cellular bud neck"/>
    <property type="evidence" value="ECO:0000314"/>
    <property type="project" value="SGD"/>
</dbReference>
<dbReference type="GO" id="GO:0005816">
    <property type="term" value="C:spindle pole body"/>
    <property type="evidence" value="ECO:0000314"/>
    <property type="project" value="SGD"/>
</dbReference>
<dbReference type="GO" id="GO:0005524">
    <property type="term" value="F:ATP binding"/>
    <property type="evidence" value="ECO:0007669"/>
    <property type="project" value="UniProtKB-KW"/>
</dbReference>
<dbReference type="GO" id="GO:0004672">
    <property type="term" value="F:protein kinase activity"/>
    <property type="evidence" value="ECO:0007005"/>
    <property type="project" value="SGD"/>
</dbReference>
<dbReference type="GO" id="GO:0106310">
    <property type="term" value="F:protein serine kinase activity"/>
    <property type="evidence" value="ECO:0007669"/>
    <property type="project" value="RHEA"/>
</dbReference>
<dbReference type="GO" id="GO:0004674">
    <property type="term" value="F:protein serine/threonine kinase activity"/>
    <property type="evidence" value="ECO:0000314"/>
    <property type="project" value="SGD"/>
</dbReference>
<dbReference type="GO" id="GO:0031578">
    <property type="term" value="P:mitotic spindle orientation checkpoint signaling"/>
    <property type="evidence" value="ECO:0000315"/>
    <property type="project" value="SGD"/>
</dbReference>
<dbReference type="GO" id="GO:0045033">
    <property type="term" value="P:peroxisome inheritance"/>
    <property type="evidence" value="ECO:0000315"/>
    <property type="project" value="SGD"/>
</dbReference>
<dbReference type="GO" id="GO:0071988">
    <property type="term" value="P:protein localization to spindle pole body"/>
    <property type="evidence" value="ECO:0000315"/>
    <property type="project" value="SGD"/>
</dbReference>
<dbReference type="GO" id="GO:0000011">
    <property type="term" value="P:vacuole inheritance"/>
    <property type="evidence" value="ECO:0000316"/>
    <property type="project" value="SGD"/>
</dbReference>
<dbReference type="CDD" id="cd14076">
    <property type="entry name" value="STKc_Kin4"/>
    <property type="match status" value="1"/>
</dbReference>
<dbReference type="FunFam" id="1.10.510.10:FF:000397">
    <property type="entry name" value="Serine/threonine-protein kinase KIN4"/>
    <property type="match status" value="1"/>
</dbReference>
<dbReference type="Gene3D" id="1.10.510.10">
    <property type="entry name" value="Transferase(Phosphotransferase) domain 1"/>
    <property type="match status" value="1"/>
</dbReference>
<dbReference type="InterPro" id="IPR011009">
    <property type="entry name" value="Kinase-like_dom_sf"/>
</dbReference>
<dbReference type="InterPro" id="IPR000719">
    <property type="entry name" value="Prot_kinase_dom"/>
</dbReference>
<dbReference type="InterPro" id="IPR017441">
    <property type="entry name" value="Protein_kinase_ATP_BS"/>
</dbReference>
<dbReference type="InterPro" id="IPR008271">
    <property type="entry name" value="Ser/Thr_kinase_AS"/>
</dbReference>
<dbReference type="InterPro" id="IPR034674">
    <property type="entry name" value="STK_Kin4/ppk1"/>
</dbReference>
<dbReference type="PANTHER" id="PTHR24346">
    <property type="entry name" value="MAP/MICROTUBULE AFFINITY-REGULATING KINASE"/>
    <property type="match status" value="1"/>
</dbReference>
<dbReference type="PANTHER" id="PTHR24346:SF110">
    <property type="entry name" value="NON-SPECIFIC SERINE_THREONINE PROTEIN KINASE"/>
    <property type="match status" value="1"/>
</dbReference>
<dbReference type="Pfam" id="PF00069">
    <property type="entry name" value="Pkinase"/>
    <property type="match status" value="1"/>
</dbReference>
<dbReference type="SMART" id="SM00220">
    <property type="entry name" value="S_TKc"/>
    <property type="match status" value="1"/>
</dbReference>
<dbReference type="SUPFAM" id="SSF56112">
    <property type="entry name" value="Protein kinase-like (PK-like)"/>
    <property type="match status" value="1"/>
</dbReference>
<dbReference type="PROSITE" id="PS00107">
    <property type="entry name" value="PROTEIN_KINASE_ATP"/>
    <property type="match status" value="1"/>
</dbReference>
<dbReference type="PROSITE" id="PS50011">
    <property type="entry name" value="PROTEIN_KINASE_DOM"/>
    <property type="match status" value="1"/>
</dbReference>
<dbReference type="PROSITE" id="PS00108">
    <property type="entry name" value="PROTEIN_KINASE_ST"/>
    <property type="match status" value="1"/>
</dbReference>
<name>KIN4_YEAST</name>
<reference key="1">
    <citation type="journal article" date="1993" name="Yeast">
        <title>Cloning and genetic analysis of the gene encoding a new protein kinase in Saccharomyces cerevisiae.</title>
        <authorList>
            <person name="Kambouris N.G."/>
            <person name="Burke D.J."/>
            <person name="Creutz C.E."/>
        </authorList>
    </citation>
    <scope>NUCLEOTIDE SEQUENCE [GENOMIC DNA]</scope>
</reference>
<reference key="2">
    <citation type="journal article" date="1996" name="Yeast">
        <title>Sequence and analysis of a 26.9 kb fragment from chromosome XV of the yeast Saccharomyces cerevisiae.</title>
        <authorList>
            <person name="Boyer J."/>
            <person name="Michaux G."/>
            <person name="Fairhead C."/>
            <person name="Gaillon L."/>
            <person name="Dujon B."/>
        </authorList>
    </citation>
    <scope>NUCLEOTIDE SEQUENCE [GENOMIC DNA]</scope>
    <source>
        <strain>ATCC 96604 / S288c / FY1679</strain>
    </source>
</reference>
<reference key="3">
    <citation type="journal article" date="1997" name="Nature">
        <title>The nucleotide sequence of Saccharomyces cerevisiae chromosome XV.</title>
        <authorList>
            <person name="Dujon B."/>
            <person name="Albermann K."/>
            <person name="Aldea M."/>
            <person name="Alexandraki D."/>
            <person name="Ansorge W."/>
            <person name="Arino J."/>
            <person name="Benes V."/>
            <person name="Bohn C."/>
            <person name="Bolotin-Fukuhara M."/>
            <person name="Bordonne R."/>
            <person name="Boyer J."/>
            <person name="Camasses A."/>
            <person name="Casamayor A."/>
            <person name="Casas C."/>
            <person name="Cheret G."/>
            <person name="Cziepluch C."/>
            <person name="Daignan-Fornier B."/>
            <person name="Dang V.-D."/>
            <person name="de Haan M."/>
            <person name="Delius H."/>
            <person name="Durand P."/>
            <person name="Fairhead C."/>
            <person name="Feldmann H."/>
            <person name="Gaillon L."/>
            <person name="Galisson F."/>
            <person name="Gamo F.-J."/>
            <person name="Gancedo C."/>
            <person name="Goffeau A."/>
            <person name="Goulding S.E."/>
            <person name="Grivell L.A."/>
            <person name="Habbig B."/>
            <person name="Hand N.J."/>
            <person name="Hani J."/>
            <person name="Hattenhorst U."/>
            <person name="Hebling U."/>
            <person name="Hernando Y."/>
            <person name="Herrero E."/>
            <person name="Heumann K."/>
            <person name="Hiesel R."/>
            <person name="Hilger F."/>
            <person name="Hofmann B."/>
            <person name="Hollenberg C.P."/>
            <person name="Hughes B."/>
            <person name="Jauniaux J.-C."/>
            <person name="Kalogeropoulos A."/>
            <person name="Katsoulou C."/>
            <person name="Kordes E."/>
            <person name="Lafuente M.J."/>
            <person name="Landt O."/>
            <person name="Louis E.J."/>
            <person name="Maarse A.C."/>
            <person name="Madania A."/>
            <person name="Mannhaupt G."/>
            <person name="Marck C."/>
            <person name="Martin R.P."/>
            <person name="Mewes H.-W."/>
            <person name="Michaux G."/>
            <person name="Paces V."/>
            <person name="Parle-McDermott A.G."/>
            <person name="Pearson B.M."/>
            <person name="Perrin A."/>
            <person name="Pettersson B."/>
            <person name="Poch O."/>
            <person name="Pohl T.M."/>
            <person name="Poirey R."/>
            <person name="Portetelle D."/>
            <person name="Pujol A."/>
            <person name="Purnelle B."/>
            <person name="Ramezani Rad M."/>
            <person name="Rechmann S."/>
            <person name="Schwager C."/>
            <person name="Schweizer M."/>
            <person name="Sor F."/>
            <person name="Sterky F."/>
            <person name="Tarassov I.A."/>
            <person name="Teodoru C."/>
            <person name="Tettelin H."/>
            <person name="Thierry A."/>
            <person name="Tobiasch E."/>
            <person name="Tzermia M."/>
            <person name="Uhlen M."/>
            <person name="Unseld M."/>
            <person name="Valens M."/>
            <person name="Vandenbol M."/>
            <person name="Vetter I."/>
            <person name="Vlcek C."/>
            <person name="Voet M."/>
            <person name="Volckaert G."/>
            <person name="Voss H."/>
            <person name="Wambutt R."/>
            <person name="Wedler H."/>
            <person name="Wiemann S."/>
            <person name="Winsor B."/>
            <person name="Wolfe K.H."/>
            <person name="Zollner A."/>
            <person name="Zumstein E."/>
            <person name="Kleine K."/>
        </authorList>
    </citation>
    <scope>NUCLEOTIDE SEQUENCE [LARGE SCALE GENOMIC DNA]</scope>
    <source>
        <strain>ATCC 204508 / S288c</strain>
    </source>
</reference>
<reference key="4">
    <citation type="journal article" date="2014" name="G3 (Bethesda)">
        <title>The reference genome sequence of Saccharomyces cerevisiae: Then and now.</title>
        <authorList>
            <person name="Engel S.R."/>
            <person name="Dietrich F.S."/>
            <person name="Fisk D.G."/>
            <person name="Binkley G."/>
            <person name="Balakrishnan R."/>
            <person name="Costanzo M.C."/>
            <person name="Dwight S.S."/>
            <person name="Hitz B.C."/>
            <person name="Karra K."/>
            <person name="Nash R.S."/>
            <person name="Weng S."/>
            <person name="Wong E.D."/>
            <person name="Lloyd P."/>
            <person name="Skrzypek M.S."/>
            <person name="Miyasato S.R."/>
            <person name="Simison M."/>
            <person name="Cherry J.M."/>
        </authorList>
    </citation>
    <scope>GENOME REANNOTATION</scope>
    <source>
        <strain>ATCC 204508 / S288c</strain>
    </source>
</reference>
<reference key="5">
    <citation type="journal article" date="2003" name="Nature">
        <title>Global analysis of protein expression in yeast.</title>
        <authorList>
            <person name="Ghaemmaghami S."/>
            <person name="Huh W.-K."/>
            <person name="Bower K."/>
            <person name="Howson R.W."/>
            <person name="Belle A."/>
            <person name="Dephoure N."/>
            <person name="O'Shea E.K."/>
            <person name="Weissman J.S."/>
        </authorList>
    </citation>
    <scope>LEVEL OF PROTEIN EXPRESSION [LARGE SCALE ANALYSIS]</scope>
</reference>
<reference key="6">
    <citation type="journal article" date="2007" name="J. Proteome Res.">
        <title>Large-scale phosphorylation analysis of alpha-factor-arrested Saccharomyces cerevisiae.</title>
        <authorList>
            <person name="Li X."/>
            <person name="Gerber S.A."/>
            <person name="Rudner A.D."/>
            <person name="Beausoleil S.A."/>
            <person name="Haas W."/>
            <person name="Villen J."/>
            <person name="Elias J.E."/>
            <person name="Gygi S.P."/>
        </authorList>
    </citation>
    <scope>PHOSPHORYLATION [LARGE SCALE ANALYSIS] AT SER-365</scope>
    <scope>IDENTIFICATION BY MASS SPECTROMETRY [LARGE SCALE ANALYSIS]</scope>
    <source>
        <strain>ADR376</strain>
    </source>
</reference>
<reference key="7">
    <citation type="journal article" date="2008" name="Mol. Cell. Proteomics">
        <title>A multidimensional chromatography technology for in-depth phosphoproteome analysis.</title>
        <authorList>
            <person name="Albuquerque C.P."/>
            <person name="Smolka M.B."/>
            <person name="Payne S.H."/>
            <person name="Bafna V."/>
            <person name="Eng J."/>
            <person name="Zhou H."/>
        </authorList>
    </citation>
    <scope>PHOSPHORYLATION [LARGE SCALE ANALYSIS] AT SER-365 AND SER-388</scope>
    <scope>IDENTIFICATION BY MASS SPECTROMETRY [LARGE SCALE ANALYSIS]</scope>
</reference>
<reference key="8">
    <citation type="journal article" date="2009" name="Science">
        <title>Global analysis of Cdk1 substrate phosphorylation sites provides insights into evolution.</title>
        <authorList>
            <person name="Holt L.J."/>
            <person name="Tuch B.B."/>
            <person name="Villen J."/>
            <person name="Johnson A.D."/>
            <person name="Gygi S.P."/>
            <person name="Morgan D.O."/>
        </authorList>
    </citation>
    <scope>PHOSPHORYLATION [LARGE SCALE ANALYSIS] AT SER-365; SER-521 AND SER-748</scope>
    <scope>IDENTIFICATION BY MASS SPECTROMETRY [LARGE SCALE ANALYSIS]</scope>
</reference>
<feature type="chain" id="PRO_0000086135" description="Serine/threonine-protein kinase KIN4">
    <location>
        <begin position="1"/>
        <end position="800"/>
    </location>
</feature>
<feature type="domain" description="Protein kinase" evidence="1">
    <location>
        <begin position="46"/>
        <end position="313"/>
    </location>
</feature>
<feature type="region of interest" description="Disordered" evidence="3">
    <location>
        <begin position="331"/>
        <end position="397"/>
    </location>
</feature>
<feature type="region of interest" description="Disordered" evidence="3">
    <location>
        <begin position="438"/>
        <end position="487"/>
    </location>
</feature>
<feature type="region of interest" description="Disordered" evidence="3">
    <location>
        <begin position="629"/>
        <end position="661"/>
    </location>
</feature>
<feature type="region of interest" description="Disordered" evidence="3">
    <location>
        <begin position="678"/>
        <end position="754"/>
    </location>
</feature>
<feature type="compositionally biased region" description="Low complexity" evidence="3">
    <location>
        <begin position="348"/>
        <end position="358"/>
    </location>
</feature>
<feature type="compositionally biased region" description="Polar residues" evidence="3">
    <location>
        <begin position="380"/>
        <end position="395"/>
    </location>
</feature>
<feature type="compositionally biased region" description="Polar residues" evidence="3">
    <location>
        <begin position="459"/>
        <end position="473"/>
    </location>
</feature>
<feature type="compositionally biased region" description="Polar residues" evidence="3">
    <location>
        <begin position="678"/>
        <end position="721"/>
    </location>
</feature>
<feature type="compositionally biased region" description="Basic and acidic residues" evidence="3">
    <location>
        <begin position="727"/>
        <end position="740"/>
    </location>
</feature>
<feature type="active site" description="Proton acceptor" evidence="1 2">
    <location>
        <position position="175"/>
    </location>
</feature>
<feature type="binding site" evidence="1">
    <location>
        <begin position="52"/>
        <end position="60"/>
    </location>
    <ligand>
        <name>ATP</name>
        <dbReference type="ChEBI" id="CHEBI:30616"/>
    </ligand>
</feature>
<feature type="binding site" evidence="1">
    <location>
        <position position="80"/>
    </location>
    <ligand>
        <name>ATP</name>
        <dbReference type="ChEBI" id="CHEBI:30616"/>
    </ligand>
</feature>
<feature type="modified residue" description="Phosphoserine" evidence="5 6 7">
    <location>
        <position position="365"/>
    </location>
</feature>
<feature type="modified residue" description="Phosphoserine" evidence="6">
    <location>
        <position position="388"/>
    </location>
</feature>
<feature type="modified residue" description="Phosphoserine" evidence="7">
    <location>
        <position position="521"/>
    </location>
</feature>
<feature type="modified residue" description="Phosphoserine" evidence="7">
    <location>
        <position position="748"/>
    </location>
</feature>